<organism>
    <name type="scientific">Chromohalobacter salexigens (strain ATCC BAA-138 / DSM 3043 / CIP 106854 / NCIMB 13768 / 1H11)</name>
    <dbReference type="NCBI Taxonomy" id="290398"/>
    <lineage>
        <taxon>Bacteria</taxon>
        <taxon>Pseudomonadati</taxon>
        <taxon>Pseudomonadota</taxon>
        <taxon>Gammaproteobacteria</taxon>
        <taxon>Oceanospirillales</taxon>
        <taxon>Halomonadaceae</taxon>
        <taxon>Chromohalobacter</taxon>
    </lineage>
</organism>
<accession>Q1QUL4</accession>
<protein>
    <recommendedName>
        <fullName evidence="1">Chaperone protein HtpG</fullName>
    </recommendedName>
    <alternativeName>
        <fullName evidence="1">Heat shock protein HtpG</fullName>
    </alternativeName>
    <alternativeName>
        <fullName evidence="1">High temperature protein G</fullName>
    </alternativeName>
</protein>
<comment type="function">
    <text evidence="1">Molecular chaperone. Has ATPase activity.</text>
</comment>
<comment type="subunit">
    <text evidence="1">Homodimer.</text>
</comment>
<comment type="subcellular location">
    <subcellularLocation>
        <location evidence="1">Cytoplasm</location>
    </subcellularLocation>
</comment>
<comment type="similarity">
    <text evidence="1">Belongs to the heat shock protein 90 family.</text>
</comment>
<keyword id="KW-0067">ATP-binding</keyword>
<keyword id="KW-0143">Chaperone</keyword>
<keyword id="KW-0963">Cytoplasm</keyword>
<keyword id="KW-0547">Nucleotide-binding</keyword>
<keyword id="KW-1185">Reference proteome</keyword>
<keyword id="KW-0346">Stress response</keyword>
<gene>
    <name evidence="1" type="primary">htpG</name>
    <name type="ordered locus">Csal_2497</name>
</gene>
<sequence length="632" mass="71654">MTTAAHAETLGFQTEVKQLLQLMIHSLYSNREIFLRELISNAADACDKLRYEALENDTLYGDDSELRIEIEHDAEAGTVTVRDNGIGMSRDEVIQNLGTIARSGTAEFLQQLSGEKQKDAKLIGQFGVGFYSGFIVSDEITVRTRRVDQEQGVQWHSRGEGEFDIADIDKPERGTEIVLHLKEDAKEFADAERLKHLVRTYSDHIEVPVRMPKVEKAHDEEGNEIEGSETVTWETVNEATALWVRPKEEISDDEYKAFYKHVAHDFSDPLTWSHNKVEGKLEYTSLLYVPGRAPFDLYQREGVRGLKLYVQRVFIMDDAEQFLPLYLRFIKGVVDSKDLSLNVSRELLQKDPQVDKLKSALTKRSLDMLKKLAKDEEAYQTFWNAFGNVLKEGPAEDFANRDKIADLLRFSSTQTDSATQDQSLAGYVSRMKEGQQKIYYLVADGFNAASHSPHLEIFRKKGIEVLLLHDRIDEWLMSHLTEYDGKAFADVAKGDLDLDDMADEEEKKAQEETAKAKAPLIERVKTALGDEVQEVRITHRLTDSPACVVLSEHDMGYQMRRLMEAAGQPLPEVKPILELNPEHSLVARLEGADDSVFNDLARILLDQAIIAEGGHLEDPATYVQRLNKLLSH</sequence>
<feature type="chain" id="PRO_0000258506" description="Chaperone protein HtpG">
    <location>
        <begin position="1"/>
        <end position="632"/>
    </location>
</feature>
<feature type="region of interest" description="A; substrate-binding" evidence="1">
    <location>
        <begin position="1"/>
        <end position="345"/>
    </location>
</feature>
<feature type="region of interest" description="B" evidence="1">
    <location>
        <begin position="346"/>
        <end position="561"/>
    </location>
</feature>
<feature type="region of interest" description="C" evidence="1">
    <location>
        <begin position="562"/>
        <end position="632"/>
    </location>
</feature>
<evidence type="ECO:0000255" key="1">
    <source>
        <dbReference type="HAMAP-Rule" id="MF_00505"/>
    </source>
</evidence>
<proteinExistence type="inferred from homology"/>
<reference key="1">
    <citation type="journal article" date="2011" name="Stand. Genomic Sci.">
        <title>Complete genome sequence of the halophilic and highly halotolerant Chromohalobacter salexigens type strain (1H11(T)).</title>
        <authorList>
            <person name="Copeland A."/>
            <person name="O'Connor K."/>
            <person name="Lucas S."/>
            <person name="Lapidus A."/>
            <person name="Berry K.W."/>
            <person name="Detter J.C."/>
            <person name="Del Rio T.G."/>
            <person name="Hammon N."/>
            <person name="Dalin E."/>
            <person name="Tice H."/>
            <person name="Pitluck S."/>
            <person name="Bruce D."/>
            <person name="Goodwin L."/>
            <person name="Han C."/>
            <person name="Tapia R."/>
            <person name="Saunders E."/>
            <person name="Schmutz J."/>
            <person name="Brettin T."/>
            <person name="Larimer F."/>
            <person name="Land M."/>
            <person name="Hauser L."/>
            <person name="Vargas C."/>
            <person name="Nieto J.J."/>
            <person name="Kyrpides N.C."/>
            <person name="Ivanova N."/>
            <person name="Goker M."/>
            <person name="Klenk H.P."/>
            <person name="Csonka L.N."/>
            <person name="Woyke T."/>
        </authorList>
    </citation>
    <scope>NUCLEOTIDE SEQUENCE [LARGE SCALE GENOMIC DNA]</scope>
    <source>
        <strain>ATCC BAA-138 / DSM 3043 / CIP 106854 / NCIMB 13768 / 1H11</strain>
    </source>
</reference>
<name>HTPG_CHRSD</name>
<dbReference type="EMBL" id="CP000285">
    <property type="protein sequence ID" value="ABE59844.1"/>
    <property type="molecule type" value="Genomic_DNA"/>
</dbReference>
<dbReference type="RefSeq" id="WP_011507790.1">
    <property type="nucleotide sequence ID" value="NC_007963.1"/>
</dbReference>
<dbReference type="SMR" id="Q1QUL4"/>
<dbReference type="STRING" id="290398.Csal_2497"/>
<dbReference type="GeneID" id="95335201"/>
<dbReference type="KEGG" id="csa:Csal_2497"/>
<dbReference type="eggNOG" id="COG0326">
    <property type="taxonomic scope" value="Bacteria"/>
</dbReference>
<dbReference type="HOGENOM" id="CLU_006684_3_0_6"/>
<dbReference type="OrthoDB" id="9802640at2"/>
<dbReference type="Proteomes" id="UP000000239">
    <property type="component" value="Chromosome"/>
</dbReference>
<dbReference type="GO" id="GO:0005737">
    <property type="term" value="C:cytoplasm"/>
    <property type="evidence" value="ECO:0007669"/>
    <property type="project" value="UniProtKB-SubCell"/>
</dbReference>
<dbReference type="GO" id="GO:0005524">
    <property type="term" value="F:ATP binding"/>
    <property type="evidence" value="ECO:0007669"/>
    <property type="project" value="UniProtKB-UniRule"/>
</dbReference>
<dbReference type="GO" id="GO:0016887">
    <property type="term" value="F:ATP hydrolysis activity"/>
    <property type="evidence" value="ECO:0007669"/>
    <property type="project" value="InterPro"/>
</dbReference>
<dbReference type="GO" id="GO:0140662">
    <property type="term" value="F:ATP-dependent protein folding chaperone"/>
    <property type="evidence" value="ECO:0007669"/>
    <property type="project" value="InterPro"/>
</dbReference>
<dbReference type="GO" id="GO:0051082">
    <property type="term" value="F:unfolded protein binding"/>
    <property type="evidence" value="ECO:0007669"/>
    <property type="project" value="UniProtKB-UniRule"/>
</dbReference>
<dbReference type="CDD" id="cd16927">
    <property type="entry name" value="HATPase_Hsp90-like"/>
    <property type="match status" value="1"/>
</dbReference>
<dbReference type="FunFam" id="3.30.230.80:FF:000002">
    <property type="entry name" value="Molecular chaperone HtpG"/>
    <property type="match status" value="1"/>
</dbReference>
<dbReference type="FunFam" id="3.30.565.10:FF:000009">
    <property type="entry name" value="Molecular chaperone HtpG"/>
    <property type="match status" value="1"/>
</dbReference>
<dbReference type="Gene3D" id="3.30.230.80">
    <property type="match status" value="1"/>
</dbReference>
<dbReference type="Gene3D" id="3.40.50.11260">
    <property type="match status" value="1"/>
</dbReference>
<dbReference type="Gene3D" id="1.20.120.790">
    <property type="entry name" value="Heat shock protein 90, C-terminal domain"/>
    <property type="match status" value="1"/>
</dbReference>
<dbReference type="Gene3D" id="3.30.565.10">
    <property type="entry name" value="Histidine kinase-like ATPase, C-terminal domain"/>
    <property type="match status" value="1"/>
</dbReference>
<dbReference type="HAMAP" id="MF_00505">
    <property type="entry name" value="HSP90"/>
    <property type="match status" value="1"/>
</dbReference>
<dbReference type="InterPro" id="IPR036890">
    <property type="entry name" value="HATPase_C_sf"/>
</dbReference>
<dbReference type="InterPro" id="IPR019805">
    <property type="entry name" value="Heat_shock_protein_90_CS"/>
</dbReference>
<dbReference type="InterPro" id="IPR037196">
    <property type="entry name" value="HSP90_C"/>
</dbReference>
<dbReference type="InterPro" id="IPR001404">
    <property type="entry name" value="Hsp90_fam"/>
</dbReference>
<dbReference type="InterPro" id="IPR020575">
    <property type="entry name" value="Hsp90_N"/>
</dbReference>
<dbReference type="InterPro" id="IPR020568">
    <property type="entry name" value="Ribosomal_Su5_D2-typ_SF"/>
</dbReference>
<dbReference type="NCBIfam" id="NF003555">
    <property type="entry name" value="PRK05218.1"/>
    <property type="match status" value="1"/>
</dbReference>
<dbReference type="PANTHER" id="PTHR11528">
    <property type="entry name" value="HEAT SHOCK PROTEIN 90 FAMILY MEMBER"/>
    <property type="match status" value="1"/>
</dbReference>
<dbReference type="Pfam" id="PF13589">
    <property type="entry name" value="HATPase_c_3"/>
    <property type="match status" value="1"/>
</dbReference>
<dbReference type="Pfam" id="PF00183">
    <property type="entry name" value="HSP90"/>
    <property type="match status" value="1"/>
</dbReference>
<dbReference type="PIRSF" id="PIRSF002583">
    <property type="entry name" value="Hsp90"/>
    <property type="match status" value="1"/>
</dbReference>
<dbReference type="PRINTS" id="PR00775">
    <property type="entry name" value="HEATSHOCK90"/>
</dbReference>
<dbReference type="SMART" id="SM00387">
    <property type="entry name" value="HATPase_c"/>
    <property type="match status" value="1"/>
</dbReference>
<dbReference type="SUPFAM" id="SSF55874">
    <property type="entry name" value="ATPase domain of HSP90 chaperone/DNA topoisomerase II/histidine kinase"/>
    <property type="match status" value="1"/>
</dbReference>
<dbReference type="SUPFAM" id="SSF110942">
    <property type="entry name" value="HSP90 C-terminal domain"/>
    <property type="match status" value="1"/>
</dbReference>
<dbReference type="SUPFAM" id="SSF54211">
    <property type="entry name" value="Ribosomal protein S5 domain 2-like"/>
    <property type="match status" value="1"/>
</dbReference>
<dbReference type="PROSITE" id="PS00298">
    <property type="entry name" value="HSP90"/>
    <property type="match status" value="1"/>
</dbReference>